<sequence>MEAEPPLYPMAGAAGPQGDEDLLGVPDGPEAPLDELVGAYPNYNEEEEERRYYRRKRLGVLKNVLAASAGGMLTYGVYLGLLQMQLILHYDETYREVKYGNMGLPDIDSKMLMGINVTPIAALLYTPVLIRFFGTKWMMFLAVGIYALFVSTNYWERYYTLVPSAVALGMAIVPLWASMGNYITRMAQKYHEYSHYKEQDGQGMKQRPPRGSHAPYLLVFQAIFYSFFHLSFACAQLPMIYFLNHYLYDLNHTLYNVQSCGTNSHGILSGFNKTVLRTLPRSGNLIVVESVLMAVAFLAMLLVLGLCGAAYRPTEEIDLRSVGWGNIFQLPFKHVRDYRLRHLVPFFIYSGFEVLFACTGIALGYGVCSVGLERLAYLLVAYSLGASAASLLGLLGLWLPRPVPLVAGAGVHLLLTFILFFWAPVPRVLQHSWILYVAAALWGVGSALNKTGLSTLLGILYEDKERQDFIFTIYHWWQAVAIFTVYLGSSLHMKAKLAVLLVTLVAAAVSYLRMEQKLRRGVAPRQPRIPRPQHKVRGYRYLEEDNSDESDAEGEHGDGAEEEAPPAGPRPGPEPAGLGRRPCPYEQAQGGDGPEEQ</sequence>
<organism>
    <name type="scientific">Homo sapiens</name>
    <name type="common">Human</name>
    <dbReference type="NCBI Taxonomy" id="9606"/>
    <lineage>
        <taxon>Eukaryota</taxon>
        <taxon>Metazoa</taxon>
        <taxon>Chordata</taxon>
        <taxon>Craniata</taxon>
        <taxon>Vertebrata</taxon>
        <taxon>Euteleostomi</taxon>
        <taxon>Mammalia</taxon>
        <taxon>Eutheria</taxon>
        <taxon>Euarchontoglires</taxon>
        <taxon>Primates</taxon>
        <taxon>Haplorrhini</taxon>
        <taxon>Catarrhini</taxon>
        <taxon>Hominidae</taxon>
        <taxon>Homo</taxon>
    </lineage>
</organism>
<proteinExistence type="evidence at protein level"/>
<name>UN93B_HUMAN</name>
<protein>
    <recommendedName>
        <fullName evidence="12">Protein unc-93 homolog B1</fullName>
        <shortName>Unc-93B1</shortName>
        <shortName>hUNC93B1</shortName>
    </recommendedName>
</protein>
<accession>Q9H1C4</accession>
<accession>O95764</accession>
<accession>Q569H6</accession>
<accession>Q710D4</accession>
<feature type="chain" id="PRO_0000190040" description="Protein unc-93 homolog B1">
    <location>
        <begin position="1"/>
        <end position="597"/>
    </location>
</feature>
<feature type="transmembrane region" description="Helical" evidence="3">
    <location>
        <begin position="64"/>
        <end position="84"/>
    </location>
</feature>
<feature type="transmembrane region" description="Helical" evidence="3">
    <location>
        <begin position="110"/>
        <end position="130"/>
    </location>
</feature>
<feature type="transmembrane region" description="Helical" evidence="3">
    <location>
        <begin position="132"/>
        <end position="152"/>
    </location>
</feature>
<feature type="transmembrane region" description="Helical" evidence="3">
    <location>
        <begin position="160"/>
        <end position="180"/>
    </location>
</feature>
<feature type="transmembrane region" description="Helical" evidence="3">
    <location>
        <begin position="223"/>
        <end position="243"/>
    </location>
</feature>
<feature type="transmembrane region" description="Helical" evidence="3">
    <location>
        <begin position="285"/>
        <end position="305"/>
    </location>
</feature>
<feature type="transmembrane region" description="Helical" evidence="3">
    <location>
        <begin position="343"/>
        <end position="363"/>
    </location>
</feature>
<feature type="transmembrane region" description="Helical" evidence="3">
    <location>
        <begin position="378"/>
        <end position="398"/>
    </location>
</feature>
<feature type="transmembrane region" description="Helical" evidence="3">
    <location>
        <begin position="403"/>
        <end position="423"/>
    </location>
</feature>
<feature type="transmembrane region" description="Helical" evidence="3">
    <location>
        <begin position="428"/>
        <end position="448"/>
    </location>
</feature>
<feature type="transmembrane region" description="Helical" evidence="3">
    <location>
        <begin position="469"/>
        <end position="489"/>
    </location>
</feature>
<feature type="transmembrane region" description="Helical" evidence="3">
    <location>
        <begin position="491"/>
        <end position="511"/>
    </location>
</feature>
<feature type="region of interest" description="Disordered" evidence="4">
    <location>
        <begin position="1"/>
        <end position="29"/>
    </location>
</feature>
<feature type="region of interest" description="Disordered" evidence="4">
    <location>
        <begin position="522"/>
        <end position="597"/>
    </location>
</feature>
<feature type="modified residue" description="Phosphoserine" evidence="17 19">
    <location>
        <position position="547"/>
    </location>
</feature>
<feature type="modified residue" description="Phosphoserine" evidence="16 17 18 19">
    <location>
        <position position="550"/>
    </location>
</feature>
<feature type="glycosylation site" description="N-linked (GlcNAc...) asparagine" evidence="3">
    <location>
        <position position="251"/>
    </location>
</feature>
<feature type="glycosylation site" description="N-linked (GlcNAc...) asparagine" evidence="3">
    <location>
        <position position="272"/>
    </location>
</feature>
<feature type="glycosylation site" description="N-linked (GlcNAc...) asparagine" evidence="3">
    <location>
        <position position="449"/>
    </location>
</feature>
<feature type="sequence variant" id="VAR_059850" description="In dbSNP:rs3175471.">
    <original>Y</original>
    <variation>C</variation>
    <location>
        <position position="436"/>
    </location>
</feature>
<feature type="sequence conflict" description="In Ref. 1; CAC19791." evidence="12" ref="1">
    <original>M</original>
    <variation>I</variation>
    <location>
        <position position="514"/>
    </location>
</feature>
<feature type="helix" evidence="20">
    <location>
        <begin position="47"/>
        <end position="88"/>
    </location>
</feature>
<feature type="helix" evidence="20">
    <location>
        <begin position="92"/>
        <end position="97"/>
    </location>
</feature>
<feature type="helix" evidence="20">
    <location>
        <begin position="104"/>
        <end position="116"/>
    </location>
</feature>
<feature type="helix" evidence="20">
    <location>
        <begin position="118"/>
        <end position="122"/>
    </location>
</feature>
<feature type="helix" evidence="20">
    <location>
        <begin position="123"/>
        <end position="125"/>
    </location>
</feature>
<feature type="helix" evidence="20">
    <location>
        <begin position="127"/>
        <end position="132"/>
    </location>
</feature>
<feature type="helix" evidence="20">
    <location>
        <begin position="137"/>
        <end position="151"/>
    </location>
</feature>
<feature type="turn" evidence="20">
    <location>
        <begin position="152"/>
        <end position="155"/>
    </location>
</feature>
<feature type="helix" evidence="20">
    <location>
        <begin position="158"/>
        <end position="198"/>
    </location>
</feature>
<feature type="turn" evidence="20">
    <location>
        <begin position="200"/>
        <end position="202"/>
    </location>
</feature>
<feature type="helix" evidence="20">
    <location>
        <begin position="214"/>
        <end position="234"/>
    </location>
</feature>
<feature type="helix" evidence="20">
    <location>
        <begin position="237"/>
        <end position="241"/>
    </location>
</feature>
<feature type="turn" evidence="20">
    <location>
        <begin position="242"/>
        <end position="245"/>
    </location>
</feature>
<feature type="helix" evidence="20">
    <location>
        <begin position="250"/>
        <end position="253"/>
    </location>
</feature>
<feature type="helix" evidence="20">
    <location>
        <begin position="261"/>
        <end position="263"/>
    </location>
</feature>
<feature type="strand" evidence="20">
    <location>
        <begin position="266"/>
        <end position="270"/>
    </location>
</feature>
<feature type="strand" evidence="20">
    <location>
        <begin position="276"/>
        <end position="278"/>
    </location>
</feature>
<feature type="helix" evidence="20">
    <location>
        <begin position="282"/>
        <end position="305"/>
    </location>
</feature>
<feature type="helix" evidence="20">
    <location>
        <begin position="313"/>
        <end position="320"/>
    </location>
</feature>
<feature type="helix" evidence="20">
    <location>
        <begin position="324"/>
        <end position="327"/>
    </location>
</feature>
<feature type="helix" evidence="20">
    <location>
        <begin position="330"/>
        <end position="333"/>
    </location>
</feature>
<feature type="helix" evidence="20">
    <location>
        <begin position="334"/>
        <end position="336"/>
    </location>
</feature>
<feature type="helix" evidence="20">
    <location>
        <begin position="340"/>
        <end position="358"/>
    </location>
</feature>
<feature type="turn" evidence="20">
    <location>
        <begin position="359"/>
        <end position="365"/>
    </location>
</feature>
<feature type="helix" evidence="20">
    <location>
        <begin position="366"/>
        <end position="369"/>
    </location>
</feature>
<feature type="helix" evidence="20">
    <location>
        <begin position="375"/>
        <end position="395"/>
    </location>
</feature>
<feature type="helix" evidence="20">
    <location>
        <begin position="404"/>
        <end position="421"/>
    </location>
</feature>
<feature type="helix" evidence="20">
    <location>
        <begin position="433"/>
        <end position="460"/>
    </location>
</feature>
<feature type="helix" evidence="20">
    <location>
        <begin position="464"/>
        <end position="487"/>
    </location>
</feature>
<feature type="strand" evidence="20">
    <location>
        <begin position="490"/>
        <end position="492"/>
    </location>
</feature>
<feature type="helix" evidence="20">
    <location>
        <begin position="495"/>
        <end position="517"/>
    </location>
</feature>
<gene>
    <name evidence="13" type="primary">UNC93B1</name>
    <name type="synonym">UNC93</name>
    <name type="synonym">UNC93B</name>
</gene>
<reference key="1">
    <citation type="journal article" date="2002" name="Gene">
        <title>hUNC93B1: a novel human gene representing a new gene family and encoding an unc-93-like protein.</title>
        <authorList>
            <person name="Kashuba V.I."/>
            <person name="Protopopov A.I."/>
            <person name="Kvasha S.M."/>
            <person name="Gizatullin R.Z."/>
            <person name="Wahlestedt C."/>
            <person name="Kisselev L.L."/>
            <person name="Klein G."/>
            <person name="Zabarovsky E.R."/>
        </authorList>
    </citation>
    <scope>NUCLEOTIDE SEQUENCE [MRNA]</scope>
    <scope>TISSUE SPECIFICITY</scope>
    <source>
        <tissue>Kidney</tissue>
    </source>
</reference>
<reference key="2">
    <citation type="journal article" date="2006" name="Nature">
        <title>Human chromosome 11 DNA sequence and analysis including novel gene identification.</title>
        <authorList>
            <person name="Taylor T.D."/>
            <person name="Noguchi H."/>
            <person name="Totoki Y."/>
            <person name="Toyoda A."/>
            <person name="Kuroki Y."/>
            <person name="Dewar K."/>
            <person name="Lloyd C."/>
            <person name="Itoh T."/>
            <person name="Takeda T."/>
            <person name="Kim D.-W."/>
            <person name="She X."/>
            <person name="Barlow K.F."/>
            <person name="Bloom T."/>
            <person name="Bruford E."/>
            <person name="Chang J.L."/>
            <person name="Cuomo C.A."/>
            <person name="Eichler E."/>
            <person name="FitzGerald M.G."/>
            <person name="Jaffe D.B."/>
            <person name="LaButti K."/>
            <person name="Nicol R."/>
            <person name="Park H.-S."/>
            <person name="Seaman C."/>
            <person name="Sougnez C."/>
            <person name="Yang X."/>
            <person name="Zimmer A.R."/>
            <person name="Zody M.C."/>
            <person name="Birren B.W."/>
            <person name="Nusbaum C."/>
            <person name="Fujiyama A."/>
            <person name="Hattori M."/>
            <person name="Rogers J."/>
            <person name="Lander E.S."/>
            <person name="Sakaki Y."/>
        </authorList>
    </citation>
    <scope>NUCLEOTIDE SEQUENCE [LARGE SCALE GENOMIC DNA]</scope>
</reference>
<reference key="3">
    <citation type="journal article" date="2004" name="Genome Res.">
        <title>The status, quality, and expansion of the NIH full-length cDNA project: the Mammalian Gene Collection (MGC).</title>
        <authorList>
            <consortium name="The MGC Project Team"/>
        </authorList>
    </citation>
    <scope>NUCLEOTIDE SEQUENCE [LARGE SCALE MRNA]</scope>
    <source>
        <tissue>Brain</tissue>
        <tissue>Placenta</tissue>
    </source>
</reference>
<reference key="4">
    <citation type="thesis" date="2001" institute="University of Hannover" country="Germany">
        <title>Cloning and characterization of mammalian homologs of unc-93 from Caenorhabditis elegans, a protein relevant for muscle contraction.</title>
        <authorList>
            <person name="Kollewe A."/>
        </authorList>
    </citation>
    <scope>NUCLEOTIDE SEQUENCE [MRNA] OF 1-497</scope>
    <source>
        <tissue>Uterus</tissue>
    </source>
</reference>
<reference key="5">
    <citation type="journal article" date="2006" name="Cell">
        <title>Global, in vivo, and site-specific phosphorylation dynamics in signaling networks.</title>
        <authorList>
            <person name="Olsen J.V."/>
            <person name="Blagoev B."/>
            <person name="Gnad F."/>
            <person name="Macek B."/>
            <person name="Kumar C."/>
            <person name="Mortensen P."/>
            <person name="Mann M."/>
        </authorList>
    </citation>
    <scope>PHOSPHORYLATION [LARGE SCALE ANALYSIS] AT SER-550</scope>
    <scope>IDENTIFICATION BY MASS SPECTROMETRY [LARGE SCALE ANALYSIS]</scope>
    <source>
        <tissue>Cervix carcinoma</tissue>
    </source>
</reference>
<reference key="6">
    <citation type="journal article" date="2006" name="Science">
        <title>Herpes simplex virus encephalitis in human UNC-93B deficiency.</title>
        <authorList>
            <person name="Casrouge A."/>
            <person name="Zhang S.-Y."/>
            <person name="Eidenschenk C."/>
            <person name="Jouanguy E."/>
            <person name="Puel A."/>
            <person name="Yang K."/>
            <person name="Alcais A."/>
            <person name="Picard C."/>
            <person name="Mahfoufi N."/>
            <person name="Nicolas N."/>
            <person name="Lorenzo L."/>
            <person name="Plancoulaine S."/>
            <person name="Senechal B."/>
            <person name="Geissmann F."/>
            <person name="Tabeta K."/>
            <person name="Hoebe K."/>
            <person name="Du X."/>
            <person name="Miller R.L."/>
            <person name="Heron B."/>
            <person name="Mignot C."/>
            <person name="de Villemeur T.B."/>
            <person name="Lebon P."/>
            <person name="Dulac O."/>
            <person name="Rozenberg F."/>
            <person name="Beutler B."/>
            <person name="Tardieu M."/>
            <person name="Abel L."/>
            <person name="Casanova J.-L."/>
        </authorList>
    </citation>
    <scope>INVOLVEMENT IN IIAE1</scope>
</reference>
<reference key="7">
    <citation type="journal article" date="2007" name="Hum. Immunol.">
        <title>Assessing the function of human UNC-93B in Toll-like receptor signaling and major histocompatibility complex II response.</title>
        <authorList>
            <person name="Koehn J."/>
            <person name="Huesken D."/>
            <person name="Jaritz M."/>
            <person name="Rot A."/>
            <person name="Zurini M."/>
            <person name="Dwertmann A."/>
            <person name="Beutler B."/>
            <person name="Korthaeuer U."/>
        </authorList>
    </citation>
    <scope>SUBCELLULAR LOCATION</scope>
    <scope>TISSUE SPECIFICITY</scope>
    <scope>INDUCTION</scope>
</reference>
<reference key="8">
    <citation type="journal article" date="2008" name="Immunity">
        <title>IRAK-4- and MyD88-dependent pathways are essential for the removal of developing autoreactive B cells in humans.</title>
        <authorList>
            <person name="Isnardi I."/>
            <person name="Ng Y.S."/>
            <person name="Srdanovic I."/>
            <person name="Motaghedi R."/>
            <person name="Rudchenko S."/>
            <person name="von Bernuth H."/>
            <person name="Zhang S.Y."/>
            <person name="Puel A."/>
            <person name="Jouanguy E."/>
            <person name="Picard C."/>
            <person name="Garty B.Z."/>
            <person name="Camcioglu Y."/>
            <person name="Doffinger R."/>
            <person name="Kumararatne D."/>
            <person name="Davies G."/>
            <person name="Gallin J.I."/>
            <person name="Haraguchi S."/>
            <person name="Day N.K."/>
            <person name="Casanova J.L."/>
            <person name="Meffre E."/>
        </authorList>
    </citation>
    <scope>FUNCTION</scope>
</reference>
<reference key="9">
    <citation type="journal article" date="2008" name="Proc. Natl. Acad. Sci. U.S.A.">
        <title>A quantitative atlas of mitotic phosphorylation.</title>
        <authorList>
            <person name="Dephoure N."/>
            <person name="Zhou C."/>
            <person name="Villen J."/>
            <person name="Beausoleil S.A."/>
            <person name="Bakalarski C.E."/>
            <person name="Elledge S.J."/>
            <person name="Gygi S.P."/>
        </authorList>
    </citation>
    <scope>PHOSPHORYLATION [LARGE SCALE ANALYSIS] AT SER-547 AND SER-550</scope>
    <scope>IDENTIFICATION BY MASS SPECTROMETRY [LARGE SCALE ANALYSIS]</scope>
    <source>
        <tissue>Cervix carcinoma</tissue>
    </source>
</reference>
<reference key="10">
    <citation type="journal article" date="2009" name="Mol. Cell. Proteomics">
        <title>Large-scale proteomics analysis of the human kinome.</title>
        <authorList>
            <person name="Oppermann F.S."/>
            <person name="Gnad F."/>
            <person name="Olsen J.V."/>
            <person name="Hornberger R."/>
            <person name="Greff Z."/>
            <person name="Keri G."/>
            <person name="Mann M."/>
            <person name="Daub H."/>
        </authorList>
    </citation>
    <scope>PHOSPHORYLATION [LARGE SCALE ANALYSIS] AT SER-550</scope>
    <scope>IDENTIFICATION BY MASS SPECTROMETRY [LARGE SCALE ANALYSIS]</scope>
</reference>
<reference key="11">
    <citation type="journal article" date="2011" name="Blood">
        <title>BAD-LAMP is a novel biomarker of nonactivated human plasmacytoid dendritic cells.</title>
        <authorList>
            <person name="Defays A."/>
            <person name="David A."/>
            <person name="de Gassart A."/>
            <person name="De Angelis Rigotti F."/>
            <person name="Wenger T."/>
            <person name="Camossetto V."/>
            <person name="Brousset P."/>
            <person name="Petrella T."/>
            <person name="Dalod M."/>
            <person name="Gatti E."/>
            <person name="Pierre P."/>
        </authorList>
    </citation>
    <scope>SUBCELLULAR LOCATION</scope>
    <scope>TISSUE SPECIFICITY</scope>
</reference>
<reference key="12">
    <citation type="journal article" date="2011" name="Sci. Signal.">
        <title>System-wide temporal characterization of the proteome and phosphoproteome of human embryonic stem cell differentiation.</title>
        <authorList>
            <person name="Rigbolt K.T."/>
            <person name="Prokhorova T.A."/>
            <person name="Akimov V."/>
            <person name="Henningsen J."/>
            <person name="Johansen P.T."/>
            <person name="Kratchmarova I."/>
            <person name="Kassem M."/>
            <person name="Mann M."/>
            <person name="Olsen J.V."/>
            <person name="Blagoev B."/>
        </authorList>
    </citation>
    <scope>IDENTIFICATION BY MASS SPECTROMETRY [LARGE SCALE ANALYSIS]</scope>
</reference>
<reference key="13">
    <citation type="journal article" date="2013" name="J. Proteome Res.">
        <title>Toward a comprehensive characterization of a human cancer cell phosphoproteome.</title>
        <authorList>
            <person name="Zhou H."/>
            <person name="Di Palma S."/>
            <person name="Preisinger C."/>
            <person name="Peng M."/>
            <person name="Polat A.N."/>
            <person name="Heck A.J."/>
            <person name="Mohammed S."/>
        </authorList>
    </citation>
    <scope>PHOSPHORYLATION [LARGE SCALE ANALYSIS] AT SER-547 AND SER-550</scope>
    <scope>IDENTIFICATION BY MASS SPECTROMETRY [LARGE SCALE ANALYSIS]</scope>
    <source>
        <tissue>Cervix carcinoma</tissue>
        <tissue>Erythroleukemia</tissue>
    </source>
</reference>
<reference key="14">
    <citation type="journal article" date="2014" name="Proc. Natl. Acad. Sci. U.S.A.">
        <title>UNC93B1 is essential for the plasma membrane localization and signaling of Toll-like receptor 5.</title>
        <authorList>
            <person name="Huh J.W."/>
            <person name="Shibata T."/>
            <person name="Hwang M."/>
            <person name="Kwon E.H."/>
            <person name="Jang M.S."/>
            <person name="Fukui R."/>
            <person name="Kanno A."/>
            <person name="Jung D.J."/>
            <person name="Jang M.H."/>
            <person name="Miyake K."/>
            <person name="Kim Y.M."/>
        </authorList>
    </citation>
    <scope>INTERACTION WITH TLR5</scope>
</reference>
<reference evidence="14 15" key="15">
    <citation type="journal article" date="2021" name="Nat. Struct. Mol. Biol.">
        <title>Cryo-EM structures of Toll-like receptors in complex with UNC93B1.</title>
        <authorList>
            <person name="Ishida H."/>
            <person name="Asami J."/>
            <person name="Zhang Z."/>
            <person name="Nishizawa T."/>
            <person name="Shigematsu H."/>
            <person name="Ohto U."/>
            <person name="Shimizu T."/>
        </authorList>
    </citation>
    <scope>STRUCTURE BY ELECTRON MICROSCOPY (3.40 ANGSTROMS) IN COMPLEX WITH TLR3 AND TLR7</scope>
    <scope>INTERACTION WITH TLR3 AND TLR7</scope>
</reference>
<dbReference type="EMBL" id="AJ271326">
    <property type="protein sequence ID" value="CAC19791.1"/>
    <property type="molecule type" value="mRNA"/>
</dbReference>
<dbReference type="EMBL" id="AC004923">
    <property type="protein sequence ID" value="AAD15416.1"/>
    <property type="status" value="ALT_SEQ"/>
    <property type="molecule type" value="Genomic_DNA"/>
</dbReference>
<dbReference type="EMBL" id="BC092472">
    <property type="protein sequence ID" value="AAH92472.1"/>
    <property type="molecule type" value="mRNA"/>
</dbReference>
<dbReference type="EMBL" id="BC101568">
    <property type="protein sequence ID" value="AAI01569.1"/>
    <property type="molecule type" value="mRNA"/>
</dbReference>
<dbReference type="EMBL" id="BC105104">
    <property type="protein sequence ID" value="AAI05105.1"/>
    <property type="molecule type" value="mRNA"/>
</dbReference>
<dbReference type="EMBL" id="AJ422142">
    <property type="protein sequence ID" value="CAD19522.1"/>
    <property type="molecule type" value="mRNA"/>
</dbReference>
<dbReference type="CCDS" id="CCDS73334.1"/>
<dbReference type="RefSeq" id="NP_112192.2">
    <property type="nucleotide sequence ID" value="NM_030930.3"/>
</dbReference>
<dbReference type="PDB" id="7C76">
    <property type="method" value="EM"/>
    <property type="resolution" value="3.40 A"/>
    <property type="chains" value="B=1-597"/>
</dbReference>
<dbReference type="PDB" id="7CYN">
    <property type="method" value="EM"/>
    <property type="resolution" value="4.20 A"/>
    <property type="chains" value="C/D=1-597"/>
</dbReference>
<dbReference type="PDBsum" id="7C76"/>
<dbReference type="PDBsum" id="7CYN"/>
<dbReference type="EMDB" id="EMD-30293"/>
<dbReference type="EMDB" id="EMD-30501"/>
<dbReference type="SMR" id="Q9H1C4"/>
<dbReference type="BioGRID" id="123557">
    <property type="interactions" value="469"/>
</dbReference>
<dbReference type="FunCoup" id="Q9H1C4">
    <property type="interactions" value="546"/>
</dbReference>
<dbReference type="IntAct" id="Q9H1C4">
    <property type="interactions" value="396"/>
</dbReference>
<dbReference type="MINT" id="Q9H1C4"/>
<dbReference type="STRING" id="9606.ENSP00000227471"/>
<dbReference type="TCDB" id="2.A.1.58.7">
    <property type="family name" value="the major facilitator superfamily (mfs)"/>
</dbReference>
<dbReference type="GlyCosmos" id="Q9H1C4">
    <property type="glycosylation" value="3 sites, No reported glycans"/>
</dbReference>
<dbReference type="GlyGen" id="Q9H1C4">
    <property type="glycosylation" value="4 sites"/>
</dbReference>
<dbReference type="iPTMnet" id="Q9H1C4"/>
<dbReference type="PhosphoSitePlus" id="Q9H1C4"/>
<dbReference type="SwissPalm" id="Q9H1C4"/>
<dbReference type="BioMuta" id="UNC93B1"/>
<dbReference type="DMDM" id="67462081"/>
<dbReference type="jPOST" id="Q9H1C4"/>
<dbReference type="MassIVE" id="Q9H1C4"/>
<dbReference type="PaxDb" id="9606-ENSP00000227471"/>
<dbReference type="PeptideAtlas" id="Q9H1C4"/>
<dbReference type="ProteomicsDB" id="80398"/>
<dbReference type="Pumba" id="Q9H1C4"/>
<dbReference type="ABCD" id="Q9H1C4">
    <property type="antibodies" value="12 sequenced antibodies"/>
</dbReference>
<dbReference type="Antibodypedia" id="30503">
    <property type="antibodies" value="123 antibodies from 24 providers"/>
</dbReference>
<dbReference type="DNASU" id="81622"/>
<dbReference type="Ensembl" id="ENST00000227471.7">
    <property type="protein sequence ID" value="ENSP00000227471.3"/>
    <property type="gene ID" value="ENSG00000110057.9"/>
</dbReference>
<dbReference type="GeneID" id="81622"/>
<dbReference type="KEGG" id="hsa:81622"/>
<dbReference type="MANE-Select" id="ENST00000227471.7">
    <property type="protein sequence ID" value="ENSP00000227471.3"/>
    <property type="RefSeq nucleotide sequence ID" value="NM_030930.4"/>
    <property type="RefSeq protein sequence ID" value="NP_112192.2"/>
</dbReference>
<dbReference type="UCSC" id="uc031xth.1">
    <property type="organism name" value="human"/>
</dbReference>
<dbReference type="AGR" id="HGNC:13481"/>
<dbReference type="CTD" id="81622"/>
<dbReference type="DisGeNET" id="81622"/>
<dbReference type="GeneCards" id="UNC93B1"/>
<dbReference type="HGNC" id="HGNC:13481">
    <property type="gene designation" value="UNC93B1"/>
</dbReference>
<dbReference type="HPA" id="ENSG00000110057">
    <property type="expression patterns" value="Tissue enhanced (lymphoid)"/>
</dbReference>
<dbReference type="MalaCards" id="UNC93B1"/>
<dbReference type="MIM" id="608204">
    <property type="type" value="gene"/>
</dbReference>
<dbReference type="MIM" id="610551">
    <property type="type" value="phenotype"/>
</dbReference>
<dbReference type="neXtProt" id="NX_Q9H1C4"/>
<dbReference type="OpenTargets" id="ENSG00000110057"/>
<dbReference type="Orphanet" id="1930">
    <property type="disease" value="Herpes simplex virus encephalitis"/>
</dbReference>
<dbReference type="PharmGKB" id="PA37781"/>
<dbReference type="VEuPathDB" id="HostDB:ENSG00000110057"/>
<dbReference type="eggNOG" id="KOG3097">
    <property type="taxonomic scope" value="Eukaryota"/>
</dbReference>
<dbReference type="GeneTree" id="ENSGT00530000063359"/>
<dbReference type="HOGENOM" id="CLU_037591_1_0_1"/>
<dbReference type="InParanoid" id="Q9H1C4"/>
<dbReference type="OMA" id="IFYGFFH"/>
<dbReference type="OrthoDB" id="10010517at2759"/>
<dbReference type="PAN-GO" id="Q9H1C4">
    <property type="GO annotations" value="7 GO annotations based on evolutionary models"/>
</dbReference>
<dbReference type="PhylomeDB" id="Q9H1C4"/>
<dbReference type="TreeFam" id="TF314905"/>
<dbReference type="PathwayCommons" id="Q9H1C4"/>
<dbReference type="Reactome" id="R-HSA-1679131">
    <property type="pathway name" value="Trafficking and processing of endosomal TLR"/>
</dbReference>
<dbReference type="Reactome" id="R-HSA-5602415">
    <property type="pathway name" value="UNC93B1 deficiency - HSE"/>
</dbReference>
<dbReference type="SignaLink" id="Q9H1C4"/>
<dbReference type="BioGRID-ORCS" id="81622">
    <property type="hits" value="13 hits in 324 CRISPR screens"/>
</dbReference>
<dbReference type="ChiTaRS" id="UNC93B1">
    <property type="organism name" value="human"/>
</dbReference>
<dbReference type="GeneWiki" id="UNC93B1"/>
<dbReference type="GenomeRNAi" id="81622"/>
<dbReference type="Pharos" id="Q9H1C4">
    <property type="development level" value="Tbio"/>
</dbReference>
<dbReference type="PRO" id="PR:Q9H1C4"/>
<dbReference type="Proteomes" id="UP000005640">
    <property type="component" value="Chromosome 11"/>
</dbReference>
<dbReference type="RNAct" id="Q9H1C4">
    <property type="molecule type" value="protein"/>
</dbReference>
<dbReference type="Bgee" id="ENSG00000110057">
    <property type="expression patterns" value="Expressed in granulocyte and 105 other cell types or tissues"/>
</dbReference>
<dbReference type="ExpressionAtlas" id="Q9H1C4">
    <property type="expression patterns" value="baseline and differential"/>
</dbReference>
<dbReference type="GO" id="GO:0032009">
    <property type="term" value="C:early phagosome"/>
    <property type="evidence" value="ECO:0000250"/>
    <property type="project" value="UniProtKB"/>
</dbReference>
<dbReference type="GO" id="GO:0005783">
    <property type="term" value="C:endoplasmic reticulum"/>
    <property type="evidence" value="ECO:0000314"/>
    <property type="project" value="UniProtKB"/>
</dbReference>
<dbReference type="GO" id="GO:0005789">
    <property type="term" value="C:endoplasmic reticulum membrane"/>
    <property type="evidence" value="ECO:0000304"/>
    <property type="project" value="Reactome"/>
</dbReference>
<dbReference type="GO" id="GO:0005768">
    <property type="term" value="C:endosome"/>
    <property type="evidence" value="ECO:0000314"/>
    <property type="project" value="UniProtKB"/>
</dbReference>
<dbReference type="GO" id="GO:0000139">
    <property type="term" value="C:Golgi membrane"/>
    <property type="evidence" value="ECO:0000304"/>
    <property type="project" value="Reactome"/>
</dbReference>
<dbReference type="GO" id="GO:0005764">
    <property type="term" value="C:lysosome"/>
    <property type="evidence" value="ECO:0000250"/>
    <property type="project" value="UniProtKB"/>
</dbReference>
<dbReference type="GO" id="GO:0035325">
    <property type="term" value="F:Toll-like receptor binding"/>
    <property type="evidence" value="ECO:0000353"/>
    <property type="project" value="UniProtKB"/>
</dbReference>
<dbReference type="GO" id="GO:0019886">
    <property type="term" value="P:antigen processing and presentation of exogenous peptide antigen via MHC class II"/>
    <property type="evidence" value="ECO:0007669"/>
    <property type="project" value="Ensembl"/>
</dbReference>
<dbReference type="GO" id="GO:0000902">
    <property type="term" value="P:cell morphogenesis"/>
    <property type="evidence" value="ECO:0007669"/>
    <property type="project" value="Ensembl"/>
</dbReference>
<dbReference type="GO" id="GO:0051607">
    <property type="term" value="P:defense response to virus"/>
    <property type="evidence" value="ECO:0007669"/>
    <property type="project" value="UniProtKB-KW"/>
</dbReference>
<dbReference type="GO" id="GO:0045087">
    <property type="term" value="P:innate immune response"/>
    <property type="evidence" value="ECO:0007669"/>
    <property type="project" value="UniProtKB-KW"/>
</dbReference>
<dbReference type="GO" id="GO:0006886">
    <property type="term" value="P:intracellular protein transport"/>
    <property type="evidence" value="ECO:0000250"/>
    <property type="project" value="UniProtKB"/>
</dbReference>
<dbReference type="GO" id="GO:0032735">
    <property type="term" value="P:positive regulation of interleukin-12 production"/>
    <property type="evidence" value="ECO:0007669"/>
    <property type="project" value="Ensembl"/>
</dbReference>
<dbReference type="GO" id="GO:0032755">
    <property type="term" value="P:positive regulation of interleukin-6 production"/>
    <property type="evidence" value="ECO:0007669"/>
    <property type="project" value="Ensembl"/>
</dbReference>
<dbReference type="GO" id="GO:0002457">
    <property type="term" value="P:T cell antigen processing and presentation"/>
    <property type="evidence" value="ECO:0007669"/>
    <property type="project" value="Ensembl"/>
</dbReference>
<dbReference type="GO" id="GO:0034138">
    <property type="term" value="P:toll-like receptor 3 signaling pathway"/>
    <property type="evidence" value="ECO:0000315"/>
    <property type="project" value="UniProtKB"/>
</dbReference>
<dbReference type="GO" id="GO:0034154">
    <property type="term" value="P:toll-like receptor 7 signaling pathway"/>
    <property type="evidence" value="ECO:0000315"/>
    <property type="project" value="UniProtKB"/>
</dbReference>
<dbReference type="GO" id="GO:0034162">
    <property type="term" value="P:toll-like receptor 9 signaling pathway"/>
    <property type="evidence" value="ECO:0000315"/>
    <property type="project" value="UniProtKB"/>
</dbReference>
<dbReference type="GO" id="GO:0002224">
    <property type="term" value="P:toll-like receptor signaling pathway"/>
    <property type="evidence" value="ECO:0007669"/>
    <property type="project" value="Ensembl"/>
</dbReference>
<dbReference type="CDD" id="cd17408">
    <property type="entry name" value="MFS_unc93B1"/>
    <property type="match status" value="1"/>
</dbReference>
<dbReference type="FunFam" id="1.20.1250.20:FF:001497">
    <property type="entry name" value="Uncharacterized protein"/>
    <property type="match status" value="1"/>
</dbReference>
<dbReference type="InterPro" id="IPR043268">
    <property type="entry name" value="UNC93B1"/>
</dbReference>
<dbReference type="PANTHER" id="PTHR46744">
    <property type="entry name" value="PROTEIN UNC-93 HOMOLOG B1"/>
    <property type="match status" value="1"/>
</dbReference>
<dbReference type="PANTHER" id="PTHR46744:SF1">
    <property type="entry name" value="PROTEIN UNC-93 HOMOLOG B1"/>
    <property type="match status" value="1"/>
</dbReference>
<keyword id="KW-0002">3D-structure</keyword>
<keyword id="KW-1064">Adaptive immunity</keyword>
<keyword id="KW-0051">Antiviral defense</keyword>
<keyword id="KW-0968">Cytoplasmic vesicle</keyword>
<keyword id="KW-0256">Endoplasmic reticulum</keyword>
<keyword id="KW-0967">Endosome</keyword>
<keyword id="KW-0325">Glycoprotein</keyword>
<keyword id="KW-0391">Immunity</keyword>
<keyword id="KW-0399">Innate immunity</keyword>
<keyword id="KW-0458">Lysosome</keyword>
<keyword id="KW-0472">Membrane</keyword>
<keyword id="KW-0597">Phosphoprotein</keyword>
<keyword id="KW-1267">Proteomics identification</keyword>
<keyword id="KW-1185">Reference proteome</keyword>
<keyword id="KW-0812">Transmembrane</keyword>
<keyword id="KW-1133">Transmembrane helix</keyword>
<evidence type="ECO:0000250" key="1"/>
<evidence type="ECO:0000250" key="2">
    <source>
        <dbReference type="UniProtKB" id="Q8VCW4"/>
    </source>
</evidence>
<evidence type="ECO:0000255" key="3"/>
<evidence type="ECO:0000256" key="4">
    <source>
        <dbReference type="SAM" id="MobiDB-lite"/>
    </source>
</evidence>
<evidence type="ECO:0000269" key="5">
    <source>
    </source>
</evidence>
<evidence type="ECO:0000269" key="6">
    <source>
    </source>
</evidence>
<evidence type="ECO:0000269" key="7">
    <source>
    </source>
</evidence>
<evidence type="ECO:0000269" key="8">
    <source>
    </source>
</evidence>
<evidence type="ECO:0000269" key="9">
    <source>
    </source>
</evidence>
<evidence type="ECO:0000269" key="10">
    <source>
    </source>
</evidence>
<evidence type="ECO:0000269" key="11">
    <source>
    </source>
</evidence>
<evidence type="ECO:0000305" key="12"/>
<evidence type="ECO:0000312" key="13">
    <source>
        <dbReference type="HGNC" id="HGNC:13481"/>
    </source>
</evidence>
<evidence type="ECO:0007744" key="14">
    <source>
        <dbReference type="PDB" id="7C76"/>
    </source>
</evidence>
<evidence type="ECO:0007744" key="15">
    <source>
        <dbReference type="PDB" id="7CYN"/>
    </source>
</evidence>
<evidence type="ECO:0007744" key="16">
    <source>
    </source>
</evidence>
<evidence type="ECO:0007744" key="17">
    <source>
    </source>
</evidence>
<evidence type="ECO:0007744" key="18">
    <source>
    </source>
</evidence>
<evidence type="ECO:0007744" key="19">
    <source>
    </source>
</evidence>
<evidence type="ECO:0007829" key="20">
    <source>
        <dbReference type="PDB" id="7C76"/>
    </source>
</evidence>
<comment type="function">
    <text evidence="8">Plays an important role in innate and adaptive immunity by regulating nucleotide-sensing Toll-like receptor (TLR) signaling. Required for the transport of a subset of TLRs (including TLR3, TLR7 and TLR9) from the endoplasmic reticulum to endolysosomes where they can engage pathogen nucleotides and activate signaling cascades. May play a role in autoreactive B-cells removal.</text>
</comment>
<comment type="subunit">
    <text evidence="2 10 11">Interacts with TLR3, TLR5, TLR7, and TLR9 (probably via transmembrane domain).</text>
</comment>
<comment type="interaction">
    <interactant intactId="EBI-4401271">
        <id>Q9H1C4</id>
    </interactant>
    <interactant intactId="EBI-19947314">
        <id>Q8NFU1</id>
        <label>BEST2</label>
    </interactant>
    <organismsDiffer>false</organismsDiffer>
    <experiments>3</experiments>
</comment>
<comment type="interaction">
    <interactant intactId="EBI-4401271">
        <id>Q9H1C4</id>
    </interactant>
    <interactant intactId="EBI-947033">
        <id>Q8WV48</id>
        <label>CCDC107</label>
    </interactant>
    <organismsDiffer>false</organismsDiffer>
    <experiments>3</experiments>
</comment>
<comment type="interaction">
    <interactant intactId="EBI-4401271">
        <id>Q9H1C4</id>
    </interactant>
    <interactant intactId="EBI-7797864">
        <id>P11912</id>
        <label>CD79A</label>
    </interactant>
    <organismsDiffer>false</organismsDiffer>
    <experiments>3</experiments>
</comment>
<comment type="interaction">
    <interactant intactId="EBI-4401271">
        <id>Q9H1C4</id>
    </interactant>
    <interactant intactId="EBI-740744">
        <id>O95471</id>
        <label>CLDN7</label>
    </interactant>
    <organismsDiffer>false</organismsDiffer>
    <experiments>3</experiments>
</comment>
<comment type="interaction">
    <interactant intactId="EBI-4401271">
        <id>Q9H1C4</id>
    </interactant>
    <interactant intactId="EBI-6942903">
        <id>Q96BA8</id>
        <label>CREB3L1</label>
    </interactant>
    <organismsDiffer>false</organismsDiffer>
    <experiments>3</experiments>
</comment>
<comment type="interaction">
    <interactant intactId="EBI-4401271">
        <id>Q9H1C4</id>
    </interactant>
    <interactant intactId="EBI-286709">
        <id>P55060</id>
        <label>CSE1L</label>
    </interactant>
    <organismsDiffer>false</organismsDiffer>
    <experiments>2</experiments>
</comment>
<comment type="interaction">
    <interactant intactId="EBI-4401271">
        <id>Q9H1C4</id>
    </interactant>
    <interactant intactId="EBI-3915253">
        <id>Q15125</id>
        <label>EBP</label>
    </interactant>
    <organismsDiffer>false</organismsDiffer>
    <experiments>3</experiments>
</comment>
<comment type="interaction">
    <interactant intactId="EBI-4401271">
        <id>Q9H1C4</id>
    </interactant>
    <interactant intactId="EBI-781551">
        <id>Q9Y282</id>
        <label>ERGIC3</label>
    </interactant>
    <organismsDiffer>false</organismsDiffer>
    <experiments>3</experiments>
</comment>
<comment type="interaction">
    <interactant intactId="EBI-4401271">
        <id>Q9H1C4</id>
    </interactant>
    <interactant intactId="EBI-743099">
        <id>Q969F0</id>
        <label>FATE1</label>
    </interactant>
    <organismsDiffer>false</organismsDiffer>
    <experiments>3</experiments>
</comment>
<comment type="interaction">
    <interactant intactId="EBI-4401271">
        <id>Q9H1C4</id>
    </interactant>
    <interactant intactId="EBI-17762181">
        <id>O14843</id>
        <label>FFAR3</label>
    </interactant>
    <organismsDiffer>false</organismsDiffer>
    <experiments>3</experiments>
</comment>
<comment type="interaction">
    <interactant intactId="EBI-4401271">
        <id>Q9H1C4</id>
    </interactant>
    <interactant intactId="EBI-17935713">
        <id>Q96P66</id>
        <label>GPR101</label>
    </interactant>
    <organismsDiffer>false</organismsDiffer>
    <experiments>3</experiments>
</comment>
<comment type="interaction">
    <interactant intactId="EBI-4401271">
        <id>Q9H1C4</id>
    </interactant>
    <interactant intactId="EBI-2927498">
        <id>O60883</id>
        <label>GPR37L1</label>
    </interactant>
    <organismsDiffer>false</organismsDiffer>
    <experiments>3</experiments>
</comment>
<comment type="interaction">
    <interactant intactId="EBI-4401271">
        <id>Q9H1C4</id>
    </interactant>
    <interactant intactId="EBI-13067820">
        <id>Q9NZD1</id>
        <label>GPRC5D</label>
    </interactant>
    <organismsDiffer>false</organismsDiffer>
    <experiments>3</experiments>
</comment>
<comment type="interaction">
    <interactant intactId="EBI-4401271">
        <id>Q9H1C4</id>
    </interactant>
    <interactant intactId="EBI-2867874">
        <id>Q9UM44</id>
        <label>HHLA2</label>
    </interactant>
    <organismsDiffer>false</organismsDiffer>
    <experiments>3</experiments>
</comment>
<comment type="interaction">
    <interactant intactId="EBI-4401271">
        <id>Q9H1C4</id>
    </interactant>
    <interactant intactId="EBI-9018187">
        <id>P26715</id>
        <label>KLRC1</label>
    </interactant>
    <organismsDiffer>false</organismsDiffer>
    <experiments>3</experiments>
</comment>
<comment type="interaction">
    <interactant intactId="EBI-4401271">
        <id>Q9H1C4</id>
    </interactant>
    <interactant intactId="EBI-286758">
        <id>Q14974</id>
        <label>KPNB1</label>
    </interactant>
    <organismsDiffer>false</organismsDiffer>
    <experiments>2</experiments>
</comment>
<comment type="interaction">
    <interactant intactId="EBI-4401271">
        <id>Q9H1C4</id>
    </interactant>
    <interactant intactId="EBI-10173166">
        <id>Q5T700</id>
        <label>LDLRAD1</label>
    </interactant>
    <organismsDiffer>false</organismsDiffer>
    <experiments>3</experiments>
</comment>
<comment type="interaction">
    <interactant intactId="EBI-4401271">
        <id>Q9H1C4</id>
    </interactant>
    <interactant intactId="EBI-17490413">
        <id>A8MZ59</id>
        <label>LEUTX</label>
    </interactant>
    <organismsDiffer>false</organismsDiffer>
    <experiments>3</experiments>
</comment>
<comment type="interaction">
    <interactant intactId="EBI-4401271">
        <id>Q9H1C4</id>
    </interactant>
    <interactant intactId="EBI-2830566">
        <id>Q9H400</id>
        <label>LIME1</label>
    </interactant>
    <organismsDiffer>false</organismsDiffer>
    <experiments>3</experiments>
</comment>
<comment type="interaction">
    <interactant intactId="EBI-4401271">
        <id>Q9H1C4</id>
    </interactant>
    <interactant intactId="EBI-11956541">
        <id>Q9GZY8-5</id>
        <label>MFF</label>
    </interactant>
    <organismsDiffer>false</organismsDiffer>
    <experiments>3</experiments>
</comment>
<comment type="interaction">
    <interactant intactId="EBI-4401271">
        <id>Q9H1C4</id>
    </interactant>
    <interactant intactId="EBI-1644241">
        <id>Q9H902</id>
        <label>REEP1</label>
    </interactant>
    <organismsDiffer>false</organismsDiffer>
    <experiments>3</experiments>
</comment>
<comment type="interaction">
    <interactant intactId="EBI-4401271">
        <id>Q9H1C4</id>
    </interactant>
    <interactant intactId="EBI-17295964">
        <id>Q9NQQ7-3</id>
        <label>SLC35C2</label>
    </interactant>
    <organismsDiffer>false</organismsDiffer>
    <experiments>3</experiments>
</comment>
<comment type="interaction">
    <interactant intactId="EBI-4401271">
        <id>Q9H1C4</id>
    </interactant>
    <interactant intactId="EBI-17280858">
        <id>Q8WWF3</id>
        <label>SSMEM1</label>
    </interactant>
    <organismsDiffer>false</organismsDiffer>
    <experiments>3</experiments>
</comment>
<comment type="interaction">
    <interactant intactId="EBI-4401271">
        <id>Q9H1C4</id>
    </interactant>
    <interactant intactId="EBI-726331">
        <id>Q9H7V2</id>
        <label>SYNDIG1</label>
    </interactant>
    <organismsDiffer>false</organismsDiffer>
    <experiments>3</experiments>
</comment>
<comment type="interaction">
    <interactant intactId="EBI-4401271">
        <id>Q9H1C4</id>
    </interactant>
    <interactant intactId="EBI-16356363">
        <id>Q9NR97</id>
        <label>TLR8</label>
    </interactant>
    <organismsDiffer>false</organismsDiffer>
    <experiments>4</experiments>
</comment>
<comment type="interaction">
    <interactant intactId="EBI-4401271">
        <id>Q9H1C4</id>
    </interactant>
    <interactant intactId="EBI-13351685">
        <id>Q96CE8</id>
        <label>TM4SF18</label>
    </interactant>
    <organismsDiffer>false</organismsDiffer>
    <experiments>3</experiments>
</comment>
<comment type="interaction">
    <interactant intactId="EBI-4401271">
        <id>Q9H1C4</id>
    </interactant>
    <interactant intactId="EBI-10982110">
        <id>Q96Q45-2</id>
        <label>TMEM237</label>
    </interactant>
    <organismsDiffer>false</organismsDiffer>
    <experiments>3</experiments>
</comment>
<comment type="interaction">
    <interactant intactId="EBI-4401271">
        <id>Q9H1C4</id>
    </interactant>
    <interactant intactId="EBI-25475914">
        <id>P0DTD8</id>
        <label>7b</label>
    </interactant>
    <organismsDiffer>true</organismsDiffer>
    <experiments>2</experiments>
</comment>
<comment type="subcellular location">
    <subcellularLocation>
        <location evidence="1">Endoplasmic reticulum membrane</location>
        <topology evidence="1">Multi-pass membrane protein</topology>
    </subcellularLocation>
    <subcellularLocation>
        <location evidence="1">Endosome</location>
    </subcellularLocation>
    <subcellularLocation>
        <location evidence="1">Lysosome</location>
    </subcellularLocation>
    <subcellularLocation>
        <location evidence="1">Cytoplasmic vesicle</location>
        <location evidence="1">Phagosome</location>
    </subcellularLocation>
    <text evidence="1 7 9">Relocalizes from endoplasmic reticulum to endosome and lysosome upon cell-stimulation with CpG dinucleotides (By similarity). Colocalizes with LAMP5 in large endosomal intracellular vesicles.</text>
</comment>
<comment type="tissue specificity">
    <text evidence="5 7 9">Expressed in plasmocytoid dendritic cells (at protein level). Highly expressed in antigen-presenting cells. Expressed in heart, and at lower level in kidney. Expressed at low level in other tissues.</text>
</comment>
<comment type="induction">
    <text evidence="7">Up-regulated by TLRs agonists.</text>
</comment>
<comment type="PTM">
    <text evidence="1">N-glycosylated.</text>
</comment>
<comment type="disease" evidence="6">
    <disease id="DI-02573">
        <name>Encephalopathy, acute, infection-induced, 1, herpes-specific</name>
        <acronym>IIAE1</acronym>
        <description>A rare complication of human herpesvirus 1 (HHV-1) infection, occurring in only a small minority of HHV-1 infected individuals. It is characterized by hemorrhagic necrosis of parts of the temporal and frontal lobes. Onset is over several days and involves fever, headache, seizures, stupor, and often coma, frequently with a fatal outcome.</description>
        <dbReference type="MIM" id="610551"/>
    </disease>
    <text>Disease susceptibility is associated with variants affecting the gene represented in this entry. Mutations in UNC93B1 resulting in autosomal recessive UNC93B1 deficiency predispose otherwise healthy individuals to isolated herpes simplex encephalitis due to impaired IFNs production. UNC93B1 deficiency, however, does not compromise immunity to most pathogens, unlike most known primary immunodeficiencies.</text>
</comment>
<comment type="similarity">
    <text evidence="12">Belongs to the unc-93 family.</text>
</comment>
<comment type="sequence caution" evidence="12">
    <conflict type="erroneous gene model prediction">
        <sequence resource="EMBL-CDS" id="AAD15416"/>
    </conflict>
</comment>
<comment type="online information" name="UNC93B1base">
    <link uri="https://databases.lovd.nl/shared/genes/UNC93B1"/>
    <text>UNC93B1 mutation db</text>
</comment>